<protein>
    <recommendedName>
        <fullName>bZIP transcription factor 8</fullName>
    </recommendedName>
</protein>
<evidence type="ECO:0000255" key="1">
    <source>
        <dbReference type="PROSITE-ProRule" id="PRU00978"/>
    </source>
</evidence>
<evidence type="ECO:0000256" key="2">
    <source>
        <dbReference type="SAM" id="MobiDB-lite"/>
    </source>
</evidence>
<evidence type="ECO:0000305" key="3"/>
<reference key="1">
    <citation type="journal article" date="1998" name="Science">
        <title>Genome sequence of the nematode C. elegans: a platform for investigating biology.</title>
        <authorList>
            <consortium name="The C. elegans sequencing consortium"/>
        </authorList>
    </citation>
    <scope>NUCLEOTIDE SEQUENCE [LARGE SCALE GENOMIC DNA]</scope>
    <scope>ALTERNATIVE SPLICING</scope>
    <source>
        <strain>Bristol N2</strain>
    </source>
</reference>
<feature type="chain" id="PRO_0000076647" description="bZIP transcription factor 8">
    <location>
        <begin position="1"/>
        <end position="176"/>
    </location>
</feature>
<feature type="domain" description="bZIP" evidence="1">
    <location>
        <begin position="65"/>
        <end position="128"/>
    </location>
</feature>
<feature type="region of interest" description="Disordered" evidence="2">
    <location>
        <begin position="44"/>
        <end position="101"/>
    </location>
</feature>
<feature type="region of interest" description="Basic motif" evidence="1">
    <location>
        <begin position="67"/>
        <end position="92"/>
    </location>
</feature>
<feature type="region of interest" description="Leucine-zipper" evidence="1">
    <location>
        <begin position="100"/>
        <end position="107"/>
    </location>
</feature>
<feature type="compositionally biased region" description="Low complexity" evidence="2">
    <location>
        <begin position="47"/>
        <end position="57"/>
    </location>
</feature>
<feature type="compositionally biased region" description="Basic and acidic residues" evidence="2">
    <location>
        <begin position="58"/>
        <end position="80"/>
    </location>
</feature>
<feature type="compositionally biased region" description="Basic residues" evidence="2">
    <location>
        <begin position="81"/>
        <end position="90"/>
    </location>
</feature>
<feature type="compositionally biased region" description="Basic and acidic residues" evidence="2">
    <location>
        <begin position="91"/>
        <end position="101"/>
    </location>
</feature>
<feature type="splice variant" id="VSP_046485" description="In isoform b." evidence="3">
    <location>
        <begin position="68"/>
        <end position="176"/>
    </location>
</feature>
<sequence>MSNTMQGAHYPQMAFDPTWQMHPAYATATAFNPYNVSFDFTRSPNTSGGSDESMSDGSKIDPKRSPKYLEKRMKNNEAAKKSRASRKHREQKNQTENELLKRKNAALEEELKQAKCELAQMQITIRDMSIEREAYRRENEMLKMVNNKFADSKFEPPQPLRDMTNCNLPYKYELLS</sequence>
<dbReference type="EMBL" id="FO081210">
    <property type="protein sequence ID" value="CCD69928.1"/>
    <property type="molecule type" value="Genomic_DNA"/>
</dbReference>
<dbReference type="EMBL" id="FO081210">
    <property type="protein sequence ID" value="CCD69929.1"/>
    <property type="molecule type" value="Genomic_DNA"/>
</dbReference>
<dbReference type="PIR" id="F88484">
    <property type="entry name" value="F88484"/>
</dbReference>
<dbReference type="RefSeq" id="NP_498426.1">
    <molecule id="P46505-1"/>
    <property type="nucleotide sequence ID" value="NM_066025.5"/>
</dbReference>
<dbReference type="RefSeq" id="NP_871665.1">
    <molecule id="P46505-2"/>
    <property type="nucleotide sequence ID" value="NM_181936.7"/>
</dbReference>
<dbReference type="SMR" id="P46505"/>
<dbReference type="BioGRID" id="41142">
    <property type="interactions" value="6"/>
</dbReference>
<dbReference type="IntAct" id="P46505">
    <property type="interactions" value="4"/>
</dbReference>
<dbReference type="MINT" id="P46505"/>
<dbReference type="STRING" id="6239.F23F12.9a.1"/>
<dbReference type="PaxDb" id="6239-F23F12.9a"/>
<dbReference type="PeptideAtlas" id="P46505"/>
<dbReference type="EnsemblMetazoa" id="F23F12.9a.1">
    <molecule id="P46505-1"/>
    <property type="protein sequence ID" value="F23F12.9a.1"/>
    <property type="gene ID" value="WBGene00017755"/>
</dbReference>
<dbReference type="EnsemblMetazoa" id="F23F12.9b.1">
    <molecule id="P46505-2"/>
    <property type="protein sequence ID" value="F23F12.9b.1"/>
    <property type="gene ID" value="WBGene00017755"/>
</dbReference>
<dbReference type="GeneID" id="175924"/>
<dbReference type="KEGG" id="cel:CELE_F23F12.9"/>
<dbReference type="UCSC" id="F23F12.9a">
    <property type="organism name" value="c. elegans"/>
</dbReference>
<dbReference type="AGR" id="WB:WBGene00017755"/>
<dbReference type="CTD" id="175924"/>
<dbReference type="WormBase" id="F23F12.9a">
    <molecule id="P46505-1"/>
    <property type="protein sequence ID" value="CE01256"/>
    <property type="gene ID" value="WBGene00017755"/>
    <property type="gene designation" value="zip-8"/>
</dbReference>
<dbReference type="WormBase" id="F23F12.9b">
    <molecule id="P46505-2"/>
    <property type="protein sequence ID" value="CE32389"/>
    <property type="gene ID" value="WBGene00017755"/>
    <property type="gene designation" value="zip-8"/>
</dbReference>
<dbReference type="eggNOG" id="KOG3119">
    <property type="taxonomic scope" value="Eukaryota"/>
</dbReference>
<dbReference type="HOGENOM" id="CLU_1596060_0_0_1"/>
<dbReference type="InParanoid" id="P46505"/>
<dbReference type="OMA" id="NIAMREM"/>
<dbReference type="OrthoDB" id="10039716at2759"/>
<dbReference type="PhylomeDB" id="P46505"/>
<dbReference type="SignaLink" id="P46505"/>
<dbReference type="PRO" id="PR:P46505"/>
<dbReference type="Proteomes" id="UP000001940">
    <property type="component" value="Chromosome III"/>
</dbReference>
<dbReference type="Bgee" id="WBGene00017755">
    <property type="expression patterns" value="Expressed in embryo and 3 other cell types or tissues"/>
</dbReference>
<dbReference type="GO" id="GO:0000981">
    <property type="term" value="F:DNA-binding transcription factor activity, RNA polymerase II-specific"/>
    <property type="evidence" value="ECO:0000318"/>
    <property type="project" value="GO_Central"/>
</dbReference>
<dbReference type="GO" id="GO:0000978">
    <property type="term" value="F:RNA polymerase II cis-regulatory region sequence-specific DNA binding"/>
    <property type="evidence" value="ECO:0000318"/>
    <property type="project" value="GO_Central"/>
</dbReference>
<dbReference type="GO" id="GO:0006351">
    <property type="term" value="P:DNA-templated transcription"/>
    <property type="evidence" value="ECO:0007669"/>
    <property type="project" value="InterPro"/>
</dbReference>
<dbReference type="GO" id="GO:0006357">
    <property type="term" value="P:regulation of transcription by RNA polymerase II"/>
    <property type="evidence" value="ECO:0000318"/>
    <property type="project" value="GO_Central"/>
</dbReference>
<dbReference type="CDD" id="cd14813">
    <property type="entry name" value="bZIP_BmCbz-like"/>
    <property type="match status" value="1"/>
</dbReference>
<dbReference type="Gene3D" id="1.20.5.170">
    <property type="match status" value="1"/>
</dbReference>
<dbReference type="InterPro" id="IPR004827">
    <property type="entry name" value="bZIP"/>
</dbReference>
<dbReference type="InterPro" id="IPR046347">
    <property type="entry name" value="bZIP_sf"/>
</dbReference>
<dbReference type="InterPro" id="IPR031106">
    <property type="entry name" value="C/EBP"/>
</dbReference>
<dbReference type="PANTHER" id="PTHR23334:SF74">
    <property type="entry name" value="BZIP TRANSCRIPTION FACTOR 8"/>
    <property type="match status" value="1"/>
</dbReference>
<dbReference type="PANTHER" id="PTHR23334">
    <property type="entry name" value="CCAAT/ENHANCER BINDING PROTEIN"/>
    <property type="match status" value="1"/>
</dbReference>
<dbReference type="Pfam" id="PF07716">
    <property type="entry name" value="bZIP_2"/>
    <property type="match status" value="1"/>
</dbReference>
<dbReference type="SUPFAM" id="SSF57959">
    <property type="entry name" value="Leucine zipper domain"/>
    <property type="match status" value="1"/>
</dbReference>
<dbReference type="PROSITE" id="PS50217">
    <property type="entry name" value="BZIP"/>
    <property type="match status" value="1"/>
</dbReference>
<name>BZIP8_CAEEL</name>
<accession>P46505</accession>
<accession>Q8IG25</accession>
<comment type="alternative products">
    <event type="alternative splicing"/>
    <isoform>
        <id>P46505-1</id>
        <name>a</name>
        <sequence type="displayed"/>
    </isoform>
    <isoform>
        <id>P46505-2</id>
        <name>b</name>
        <sequence type="described" ref="VSP_046485"/>
    </isoform>
</comment>
<comment type="similarity">
    <text evidence="3">Belongs to the bZIP family.</text>
</comment>
<proteinExistence type="inferred from homology"/>
<gene>
    <name type="primary">zip-8</name>
    <name type="ORF">F23F12.9</name>
</gene>
<organism>
    <name type="scientific">Caenorhabditis elegans</name>
    <dbReference type="NCBI Taxonomy" id="6239"/>
    <lineage>
        <taxon>Eukaryota</taxon>
        <taxon>Metazoa</taxon>
        <taxon>Ecdysozoa</taxon>
        <taxon>Nematoda</taxon>
        <taxon>Chromadorea</taxon>
        <taxon>Rhabditida</taxon>
        <taxon>Rhabditina</taxon>
        <taxon>Rhabditomorpha</taxon>
        <taxon>Rhabditoidea</taxon>
        <taxon>Rhabditidae</taxon>
        <taxon>Peloderinae</taxon>
        <taxon>Caenorhabditis</taxon>
    </lineage>
</organism>
<keyword id="KW-0025">Alternative splicing</keyword>
<keyword id="KW-1185">Reference proteome</keyword>